<name>PROB_DEIGD</name>
<sequence length="363" mass="38958">MRVVLKLGTSVLTAGTDRLHRPRLVDLLRGIAEVRAAGHEVVLVTSGAVLAGWEALGFPPRERTLAEKQLLAAVGQGRLMHLYASIADLYGMPVAQVLLTADDFRDRTRYLNARTTLEGCLTRGVLPIINENDTVAVEQIKVGDNDTLSAFVANLVEADLLVILTDAPGLYTADPRIDPTATLIPVVERVTPEVWALAGGAGSHRGTGGMHTKLQAAEIATRAGTPVVIAPGDAENALARIVRGEALGTRFLAHGSRLEARKRWILAEIATGRLLLDEGAVRAVRERGGSLLPAGITTVHGPFERGHTVRLLAPDGSEVARGLTRYRADDLKRIAGRHSRDIEAVLGFTYGPEAVHRDDLVRL</sequence>
<dbReference type="EC" id="2.7.2.11" evidence="1"/>
<dbReference type="EMBL" id="CP000359">
    <property type="protein sequence ID" value="ABF45292.1"/>
    <property type="molecule type" value="Genomic_DNA"/>
</dbReference>
<dbReference type="RefSeq" id="WP_011530129.1">
    <property type="nucleotide sequence ID" value="NC_008025.1"/>
</dbReference>
<dbReference type="SMR" id="Q1IZP2"/>
<dbReference type="STRING" id="319795.Dgeo_0992"/>
<dbReference type="KEGG" id="dge:Dgeo_0992"/>
<dbReference type="eggNOG" id="COG0263">
    <property type="taxonomic scope" value="Bacteria"/>
</dbReference>
<dbReference type="HOGENOM" id="CLU_025400_2_0_0"/>
<dbReference type="UniPathway" id="UPA00098">
    <property type="reaction ID" value="UER00359"/>
</dbReference>
<dbReference type="Proteomes" id="UP000002431">
    <property type="component" value="Chromosome"/>
</dbReference>
<dbReference type="GO" id="GO:0005829">
    <property type="term" value="C:cytosol"/>
    <property type="evidence" value="ECO:0007669"/>
    <property type="project" value="TreeGrafter"/>
</dbReference>
<dbReference type="GO" id="GO:0005524">
    <property type="term" value="F:ATP binding"/>
    <property type="evidence" value="ECO:0007669"/>
    <property type="project" value="UniProtKB-KW"/>
</dbReference>
<dbReference type="GO" id="GO:0004349">
    <property type="term" value="F:glutamate 5-kinase activity"/>
    <property type="evidence" value="ECO:0007669"/>
    <property type="project" value="UniProtKB-UniRule"/>
</dbReference>
<dbReference type="GO" id="GO:0003723">
    <property type="term" value="F:RNA binding"/>
    <property type="evidence" value="ECO:0007669"/>
    <property type="project" value="InterPro"/>
</dbReference>
<dbReference type="GO" id="GO:0055129">
    <property type="term" value="P:L-proline biosynthetic process"/>
    <property type="evidence" value="ECO:0007669"/>
    <property type="project" value="UniProtKB-UniRule"/>
</dbReference>
<dbReference type="CDD" id="cd04242">
    <property type="entry name" value="AAK_G5K_ProB"/>
    <property type="match status" value="1"/>
</dbReference>
<dbReference type="CDD" id="cd21157">
    <property type="entry name" value="PUA_G5K"/>
    <property type="match status" value="1"/>
</dbReference>
<dbReference type="FunFam" id="3.40.1160.10:FF:000018">
    <property type="entry name" value="Glutamate 5-kinase"/>
    <property type="match status" value="1"/>
</dbReference>
<dbReference type="Gene3D" id="3.40.1160.10">
    <property type="entry name" value="Acetylglutamate kinase-like"/>
    <property type="match status" value="2"/>
</dbReference>
<dbReference type="Gene3D" id="2.30.130.10">
    <property type="entry name" value="PUA domain"/>
    <property type="match status" value="1"/>
</dbReference>
<dbReference type="HAMAP" id="MF_00456">
    <property type="entry name" value="ProB"/>
    <property type="match status" value="1"/>
</dbReference>
<dbReference type="InterPro" id="IPR036393">
    <property type="entry name" value="AceGlu_kinase-like_sf"/>
</dbReference>
<dbReference type="InterPro" id="IPR001048">
    <property type="entry name" value="Asp/Glu/Uridylate_kinase"/>
</dbReference>
<dbReference type="InterPro" id="IPR041739">
    <property type="entry name" value="G5K_ProB"/>
</dbReference>
<dbReference type="InterPro" id="IPR001057">
    <property type="entry name" value="Glu/AcGlu_kinase"/>
</dbReference>
<dbReference type="InterPro" id="IPR011529">
    <property type="entry name" value="Glu_5kinase"/>
</dbReference>
<dbReference type="InterPro" id="IPR005715">
    <property type="entry name" value="Glu_5kinase/COase_Synthase"/>
</dbReference>
<dbReference type="InterPro" id="IPR019797">
    <property type="entry name" value="Glutamate_5-kinase_CS"/>
</dbReference>
<dbReference type="InterPro" id="IPR002478">
    <property type="entry name" value="PUA"/>
</dbReference>
<dbReference type="InterPro" id="IPR015947">
    <property type="entry name" value="PUA-like_sf"/>
</dbReference>
<dbReference type="InterPro" id="IPR036974">
    <property type="entry name" value="PUA_sf"/>
</dbReference>
<dbReference type="NCBIfam" id="TIGR01027">
    <property type="entry name" value="proB"/>
    <property type="match status" value="1"/>
</dbReference>
<dbReference type="PANTHER" id="PTHR43654">
    <property type="entry name" value="GLUTAMATE 5-KINASE"/>
    <property type="match status" value="1"/>
</dbReference>
<dbReference type="PANTHER" id="PTHR43654:SF1">
    <property type="entry name" value="ISOPENTENYL PHOSPHATE KINASE"/>
    <property type="match status" value="1"/>
</dbReference>
<dbReference type="Pfam" id="PF00696">
    <property type="entry name" value="AA_kinase"/>
    <property type="match status" value="1"/>
</dbReference>
<dbReference type="Pfam" id="PF01472">
    <property type="entry name" value="PUA"/>
    <property type="match status" value="1"/>
</dbReference>
<dbReference type="PIRSF" id="PIRSF000729">
    <property type="entry name" value="GK"/>
    <property type="match status" value="1"/>
</dbReference>
<dbReference type="PRINTS" id="PR00474">
    <property type="entry name" value="GLU5KINASE"/>
</dbReference>
<dbReference type="SMART" id="SM00359">
    <property type="entry name" value="PUA"/>
    <property type="match status" value="1"/>
</dbReference>
<dbReference type="SUPFAM" id="SSF53633">
    <property type="entry name" value="Carbamate kinase-like"/>
    <property type="match status" value="1"/>
</dbReference>
<dbReference type="SUPFAM" id="SSF88697">
    <property type="entry name" value="PUA domain-like"/>
    <property type="match status" value="1"/>
</dbReference>
<dbReference type="PROSITE" id="PS00902">
    <property type="entry name" value="GLUTAMATE_5_KINASE"/>
    <property type="match status" value="1"/>
</dbReference>
<dbReference type="PROSITE" id="PS50890">
    <property type="entry name" value="PUA"/>
    <property type="match status" value="1"/>
</dbReference>
<comment type="function">
    <text evidence="1">Catalyzes the transfer of a phosphate group to glutamate to form L-glutamate 5-phosphate.</text>
</comment>
<comment type="catalytic activity">
    <reaction evidence="1">
        <text>L-glutamate + ATP = L-glutamyl 5-phosphate + ADP</text>
        <dbReference type="Rhea" id="RHEA:14877"/>
        <dbReference type="ChEBI" id="CHEBI:29985"/>
        <dbReference type="ChEBI" id="CHEBI:30616"/>
        <dbReference type="ChEBI" id="CHEBI:58274"/>
        <dbReference type="ChEBI" id="CHEBI:456216"/>
        <dbReference type="EC" id="2.7.2.11"/>
    </reaction>
</comment>
<comment type="pathway">
    <text evidence="1">Amino-acid biosynthesis; L-proline biosynthesis; L-glutamate 5-semialdehyde from L-glutamate: step 1/2.</text>
</comment>
<comment type="subcellular location">
    <subcellularLocation>
        <location evidence="1">Cytoplasm</location>
    </subcellularLocation>
</comment>
<comment type="similarity">
    <text evidence="1">Belongs to the glutamate 5-kinase family.</text>
</comment>
<protein>
    <recommendedName>
        <fullName evidence="1">Glutamate 5-kinase</fullName>
        <ecNumber evidence="1">2.7.2.11</ecNumber>
    </recommendedName>
    <alternativeName>
        <fullName evidence="1">Gamma-glutamyl kinase</fullName>
        <shortName evidence="1">GK</shortName>
    </alternativeName>
</protein>
<keyword id="KW-0028">Amino-acid biosynthesis</keyword>
<keyword id="KW-0067">ATP-binding</keyword>
<keyword id="KW-0963">Cytoplasm</keyword>
<keyword id="KW-0418">Kinase</keyword>
<keyword id="KW-0547">Nucleotide-binding</keyword>
<keyword id="KW-0641">Proline biosynthesis</keyword>
<keyword id="KW-0808">Transferase</keyword>
<reference key="1">
    <citation type="submission" date="2006-04" db="EMBL/GenBank/DDBJ databases">
        <title>Complete sequence of chromosome of Deinococcus geothermalis DSM 11300.</title>
        <authorList>
            <person name="Copeland A."/>
            <person name="Lucas S."/>
            <person name="Lapidus A."/>
            <person name="Barry K."/>
            <person name="Detter J.C."/>
            <person name="Glavina del Rio T."/>
            <person name="Hammon N."/>
            <person name="Israni S."/>
            <person name="Dalin E."/>
            <person name="Tice H."/>
            <person name="Pitluck S."/>
            <person name="Brettin T."/>
            <person name="Bruce D."/>
            <person name="Han C."/>
            <person name="Tapia R."/>
            <person name="Saunders E."/>
            <person name="Gilna P."/>
            <person name="Schmutz J."/>
            <person name="Larimer F."/>
            <person name="Land M."/>
            <person name="Hauser L."/>
            <person name="Kyrpides N."/>
            <person name="Kim E."/>
            <person name="Daly M.J."/>
            <person name="Fredrickson J.K."/>
            <person name="Makarova K.S."/>
            <person name="Gaidamakova E.K."/>
            <person name="Zhai M."/>
            <person name="Richardson P."/>
        </authorList>
    </citation>
    <scope>NUCLEOTIDE SEQUENCE [LARGE SCALE GENOMIC DNA]</scope>
    <source>
        <strain>DSM 11300 / CIP 105573 / AG-3a</strain>
    </source>
</reference>
<feature type="chain" id="PRO_0000252976" description="Glutamate 5-kinase">
    <location>
        <begin position="1"/>
        <end position="363"/>
    </location>
</feature>
<feature type="domain" description="PUA" evidence="1">
    <location>
        <begin position="271"/>
        <end position="349"/>
    </location>
</feature>
<feature type="binding site" evidence="1">
    <location>
        <position position="6"/>
    </location>
    <ligand>
        <name>ATP</name>
        <dbReference type="ChEBI" id="CHEBI:30616"/>
    </ligand>
</feature>
<feature type="binding site" evidence="1">
    <location>
        <position position="46"/>
    </location>
    <ligand>
        <name>substrate</name>
    </ligand>
</feature>
<feature type="binding site" evidence="1">
    <location>
        <position position="133"/>
    </location>
    <ligand>
        <name>substrate</name>
    </ligand>
</feature>
<feature type="binding site" evidence="1">
    <location>
        <position position="145"/>
    </location>
    <ligand>
        <name>substrate</name>
    </ligand>
</feature>
<feature type="binding site" evidence="1">
    <location>
        <begin position="165"/>
        <end position="166"/>
    </location>
    <ligand>
        <name>ATP</name>
        <dbReference type="ChEBI" id="CHEBI:30616"/>
    </ligand>
</feature>
<feature type="binding site" evidence="1">
    <location>
        <begin position="207"/>
        <end position="213"/>
    </location>
    <ligand>
        <name>ATP</name>
        <dbReference type="ChEBI" id="CHEBI:30616"/>
    </ligand>
</feature>
<accession>Q1IZP2</accession>
<organism>
    <name type="scientific">Deinococcus geothermalis (strain DSM 11300 / CIP 105573 / AG-3a)</name>
    <dbReference type="NCBI Taxonomy" id="319795"/>
    <lineage>
        <taxon>Bacteria</taxon>
        <taxon>Thermotogati</taxon>
        <taxon>Deinococcota</taxon>
        <taxon>Deinococci</taxon>
        <taxon>Deinococcales</taxon>
        <taxon>Deinococcaceae</taxon>
        <taxon>Deinococcus</taxon>
    </lineage>
</organism>
<proteinExistence type="inferred from homology"/>
<evidence type="ECO:0000255" key="1">
    <source>
        <dbReference type="HAMAP-Rule" id="MF_00456"/>
    </source>
</evidence>
<gene>
    <name evidence="1" type="primary">proB</name>
    <name type="ordered locus">Dgeo_0992</name>
</gene>